<reference key="1">
    <citation type="journal article" date="2001" name="Proc. Natl. Acad. Sci. U.S.A.">
        <title>Complete genomic sequence of Pasteurella multocida Pm70.</title>
        <authorList>
            <person name="May B.J."/>
            <person name="Zhang Q."/>
            <person name="Li L.L."/>
            <person name="Paustian M.L."/>
            <person name="Whittam T.S."/>
            <person name="Kapur V."/>
        </authorList>
    </citation>
    <scope>NUCLEOTIDE SEQUENCE [LARGE SCALE GENOMIC DNA]</scope>
    <source>
        <strain>Pm70</strain>
    </source>
</reference>
<dbReference type="EMBL" id="AE004439">
    <property type="protein sequence ID" value="AAK03900.1"/>
    <property type="status" value="ALT_INIT"/>
    <property type="molecule type" value="Genomic_DNA"/>
</dbReference>
<dbReference type="SMR" id="Q9CK20"/>
<dbReference type="STRING" id="272843.PM1816"/>
<dbReference type="EnsemblBacteria" id="AAK03900">
    <property type="protein sequence ID" value="AAK03900"/>
    <property type="gene ID" value="PM1816"/>
</dbReference>
<dbReference type="KEGG" id="pmu:PM1816"/>
<dbReference type="HOGENOM" id="CLU_066607_3_2_6"/>
<dbReference type="Proteomes" id="UP000000809">
    <property type="component" value="Chromosome"/>
</dbReference>
<dbReference type="GO" id="GO:0005737">
    <property type="term" value="C:cytoplasm"/>
    <property type="evidence" value="ECO:0007669"/>
    <property type="project" value="UniProtKB-SubCell"/>
</dbReference>
<dbReference type="GO" id="GO:0006282">
    <property type="term" value="P:regulation of DNA repair"/>
    <property type="evidence" value="ECO:0007669"/>
    <property type="project" value="UniProtKB-UniRule"/>
</dbReference>
<dbReference type="Gene3D" id="1.10.10.10">
    <property type="entry name" value="Winged helix-like DNA-binding domain superfamily/Winged helix DNA-binding domain"/>
    <property type="match status" value="3"/>
</dbReference>
<dbReference type="HAMAP" id="MF_01114">
    <property type="entry name" value="RecX"/>
    <property type="match status" value="1"/>
</dbReference>
<dbReference type="InterPro" id="IPR053926">
    <property type="entry name" value="RecX_HTH_1st"/>
</dbReference>
<dbReference type="InterPro" id="IPR053924">
    <property type="entry name" value="RecX_HTH_2nd"/>
</dbReference>
<dbReference type="InterPro" id="IPR053925">
    <property type="entry name" value="RecX_HTH_3rd"/>
</dbReference>
<dbReference type="InterPro" id="IPR003783">
    <property type="entry name" value="Regulatory_RecX"/>
</dbReference>
<dbReference type="InterPro" id="IPR036388">
    <property type="entry name" value="WH-like_DNA-bd_sf"/>
</dbReference>
<dbReference type="NCBIfam" id="NF001057">
    <property type="entry name" value="PRK00117.3-3"/>
    <property type="match status" value="1"/>
</dbReference>
<dbReference type="PANTHER" id="PTHR33602">
    <property type="entry name" value="REGULATORY PROTEIN RECX FAMILY PROTEIN"/>
    <property type="match status" value="1"/>
</dbReference>
<dbReference type="PANTHER" id="PTHR33602:SF1">
    <property type="entry name" value="REGULATORY PROTEIN RECX FAMILY PROTEIN"/>
    <property type="match status" value="1"/>
</dbReference>
<dbReference type="Pfam" id="PF21982">
    <property type="entry name" value="RecX_HTH1"/>
    <property type="match status" value="1"/>
</dbReference>
<dbReference type="Pfam" id="PF02631">
    <property type="entry name" value="RecX_HTH2"/>
    <property type="match status" value="1"/>
</dbReference>
<dbReference type="Pfam" id="PF21981">
    <property type="entry name" value="RecX_HTH3"/>
    <property type="match status" value="1"/>
</dbReference>
<name>RECX_PASMU</name>
<accession>Q9CK20</accession>
<keyword id="KW-0963">Cytoplasm</keyword>
<keyword id="KW-1185">Reference proteome</keyword>
<sequence length="164" mass="19422">MISKHCKEAGNHRMSSPALNYVVGLLARREYSEFELRCKMQEKGFSEQEIDDTLAFCQQKNWQNDRRFAENYLTFRAQRGYGFARIKQELQQLKGISSALISEAEQTLAPDWQHHALTVLRKKFPQYAEITDLKLKQKVWRYMLSHGFKPEQFAHYVGHTEYEE</sequence>
<organism>
    <name type="scientific">Pasteurella multocida (strain Pm70)</name>
    <dbReference type="NCBI Taxonomy" id="272843"/>
    <lineage>
        <taxon>Bacteria</taxon>
        <taxon>Pseudomonadati</taxon>
        <taxon>Pseudomonadota</taxon>
        <taxon>Gammaproteobacteria</taxon>
        <taxon>Pasteurellales</taxon>
        <taxon>Pasteurellaceae</taxon>
        <taxon>Pasteurella</taxon>
    </lineage>
</organism>
<evidence type="ECO:0000250" key="1"/>
<evidence type="ECO:0000305" key="2"/>
<protein>
    <recommendedName>
        <fullName>Regulatory protein RecX</fullName>
    </recommendedName>
</protein>
<feature type="chain" id="PRO_0000162456" description="Regulatory protein RecX">
    <location>
        <begin position="1"/>
        <end position="164"/>
    </location>
</feature>
<comment type="function">
    <text evidence="1">Modulates RecA activity.</text>
</comment>
<comment type="subcellular location">
    <subcellularLocation>
        <location evidence="2">Cytoplasm</location>
    </subcellularLocation>
</comment>
<comment type="similarity">
    <text evidence="2">Belongs to the RecX family.</text>
</comment>
<comment type="sequence caution" evidence="2">
    <conflict type="erroneous initiation">
        <sequence resource="EMBL-CDS" id="AAK03900"/>
    </conflict>
</comment>
<gene>
    <name type="primary">recX</name>
    <name type="ordered locus">PM1816</name>
</gene>
<proteinExistence type="inferred from homology"/>